<name>EPMA_BAUCH</name>
<comment type="function">
    <text evidence="1">With EpmB is involved in the beta-lysylation step of the post-translational modification of translation elongation factor P (EF-P). Catalyzes the ATP-dependent activation of (R)-beta-lysine produced by EpmB, forming a lysyl-adenylate, from which the beta-lysyl moiety is then transferred to the epsilon-amino group of a conserved specific lysine residue in EF-P.</text>
</comment>
<comment type="catalytic activity">
    <reaction evidence="1">
        <text>D-beta-lysine + L-lysyl-[protein] + ATP = N(6)-((3R)-3,6-diaminohexanoyl)-L-lysyl-[protein] + AMP + diphosphate + H(+)</text>
        <dbReference type="Rhea" id="RHEA:83435"/>
        <dbReference type="Rhea" id="RHEA-COMP:9752"/>
        <dbReference type="Rhea" id="RHEA-COMP:20131"/>
        <dbReference type="ChEBI" id="CHEBI:15378"/>
        <dbReference type="ChEBI" id="CHEBI:29969"/>
        <dbReference type="ChEBI" id="CHEBI:30616"/>
        <dbReference type="ChEBI" id="CHEBI:33019"/>
        <dbReference type="ChEBI" id="CHEBI:84138"/>
        <dbReference type="ChEBI" id="CHEBI:156053"/>
        <dbReference type="ChEBI" id="CHEBI:456215"/>
    </reaction>
    <physiologicalReaction direction="left-to-right" evidence="1">
        <dbReference type="Rhea" id="RHEA:83436"/>
    </physiologicalReaction>
</comment>
<comment type="subunit">
    <text evidence="1">Homodimer.</text>
</comment>
<comment type="similarity">
    <text evidence="1">Belongs to the class-II aminoacyl-tRNA synthetase family. EpmA subfamily.</text>
</comment>
<proteinExistence type="inferred from homology"/>
<reference key="1">
    <citation type="journal article" date="2006" name="PLoS Biol.">
        <title>Metabolic complementarity and genomics of the dual bacterial symbiosis of sharpshooters.</title>
        <authorList>
            <person name="Wu D."/>
            <person name="Daugherty S.C."/>
            <person name="Van Aken S.E."/>
            <person name="Pai G.H."/>
            <person name="Watkins K.L."/>
            <person name="Khouri H."/>
            <person name="Tallon L.J."/>
            <person name="Zaborsky J.M."/>
            <person name="Dunbar H.E."/>
            <person name="Tran P.L."/>
            <person name="Moran N.A."/>
            <person name="Eisen J.A."/>
        </authorList>
    </citation>
    <scope>NUCLEOTIDE SEQUENCE [LARGE SCALE GENOMIC DNA]</scope>
</reference>
<protein>
    <recommendedName>
        <fullName evidence="1">Elongation factor P--(R)-beta-lysine ligase</fullName>
        <shortName evidence="1">EF-P--(R)-beta-lysine ligase</shortName>
        <ecNumber evidence="1">6.3.2.-</ecNumber>
    </recommendedName>
    <alternativeName>
        <fullName evidence="1">EF-P post-translational modification enzyme A</fullName>
    </alternativeName>
    <alternativeName>
        <fullName evidence="1">EF-P-lysine lysyltransferase</fullName>
    </alternativeName>
</protein>
<feature type="chain" id="PRO_1000023618" description="Elongation factor P--(R)-beta-lysine ligase">
    <location>
        <begin position="1"/>
        <end position="327"/>
    </location>
</feature>
<feature type="binding site" evidence="1">
    <location>
        <begin position="78"/>
        <end position="80"/>
    </location>
    <ligand>
        <name>substrate</name>
    </ligand>
</feature>
<feature type="binding site" evidence="1">
    <location>
        <begin position="102"/>
        <end position="104"/>
    </location>
    <ligand>
        <name>ATP</name>
        <dbReference type="ChEBI" id="CHEBI:30616"/>
    </ligand>
</feature>
<feature type="binding site" evidence="1">
    <location>
        <position position="111"/>
    </location>
    <ligand>
        <name>ATP</name>
        <dbReference type="ChEBI" id="CHEBI:30616"/>
    </ligand>
</feature>
<feature type="binding site" evidence="1">
    <location>
        <position position="120"/>
    </location>
    <ligand>
        <name>substrate</name>
    </ligand>
</feature>
<feature type="binding site" evidence="1">
    <location>
        <begin position="246"/>
        <end position="247"/>
    </location>
    <ligand>
        <name>ATP</name>
        <dbReference type="ChEBI" id="CHEBI:30616"/>
    </ligand>
</feature>
<feature type="binding site" evidence="1">
    <location>
        <position position="253"/>
    </location>
    <ligand>
        <name>substrate</name>
    </ligand>
</feature>
<feature type="binding site" evidence="1">
    <location>
        <position position="302"/>
    </location>
    <ligand>
        <name>ATP</name>
        <dbReference type="ChEBI" id="CHEBI:30616"/>
    </ligand>
</feature>
<dbReference type="EC" id="6.3.2.-" evidence="1"/>
<dbReference type="EMBL" id="CP000238">
    <property type="protein sequence ID" value="ABF13878.1"/>
    <property type="molecule type" value="Genomic_DNA"/>
</dbReference>
<dbReference type="RefSeq" id="WP_011520749.1">
    <property type="nucleotide sequence ID" value="NC_007984.1"/>
</dbReference>
<dbReference type="SMR" id="Q1LSP8"/>
<dbReference type="STRING" id="374463.BCI_0588"/>
<dbReference type="KEGG" id="bci:BCI_0588"/>
<dbReference type="HOGENOM" id="CLU_008255_1_1_6"/>
<dbReference type="OrthoDB" id="9802326at2"/>
<dbReference type="Proteomes" id="UP000002427">
    <property type="component" value="Chromosome"/>
</dbReference>
<dbReference type="GO" id="GO:0005829">
    <property type="term" value="C:cytosol"/>
    <property type="evidence" value="ECO:0007669"/>
    <property type="project" value="TreeGrafter"/>
</dbReference>
<dbReference type="GO" id="GO:0016880">
    <property type="term" value="F:acid-ammonia (or amide) ligase activity"/>
    <property type="evidence" value="ECO:0007669"/>
    <property type="project" value="UniProtKB-UniRule"/>
</dbReference>
<dbReference type="GO" id="GO:0005524">
    <property type="term" value="F:ATP binding"/>
    <property type="evidence" value="ECO:0007669"/>
    <property type="project" value="UniProtKB-UniRule"/>
</dbReference>
<dbReference type="GO" id="GO:0004824">
    <property type="term" value="F:lysine-tRNA ligase activity"/>
    <property type="evidence" value="ECO:0007669"/>
    <property type="project" value="InterPro"/>
</dbReference>
<dbReference type="GO" id="GO:0000049">
    <property type="term" value="F:tRNA binding"/>
    <property type="evidence" value="ECO:0007669"/>
    <property type="project" value="TreeGrafter"/>
</dbReference>
<dbReference type="GO" id="GO:0006430">
    <property type="term" value="P:lysyl-tRNA aminoacylation"/>
    <property type="evidence" value="ECO:0007669"/>
    <property type="project" value="InterPro"/>
</dbReference>
<dbReference type="FunFam" id="3.30.930.10:FF:000017">
    <property type="entry name" value="Elongation factor P--(R)-beta-lysine ligase"/>
    <property type="match status" value="1"/>
</dbReference>
<dbReference type="Gene3D" id="3.30.930.10">
    <property type="entry name" value="Bira Bifunctional Protein, Domain 2"/>
    <property type="match status" value="1"/>
</dbReference>
<dbReference type="HAMAP" id="MF_00174">
    <property type="entry name" value="EF_P_modif_A"/>
    <property type="match status" value="1"/>
</dbReference>
<dbReference type="InterPro" id="IPR004364">
    <property type="entry name" value="Aa-tRNA-synt_II"/>
</dbReference>
<dbReference type="InterPro" id="IPR006195">
    <property type="entry name" value="aa-tRNA-synth_II"/>
</dbReference>
<dbReference type="InterPro" id="IPR045864">
    <property type="entry name" value="aa-tRNA-synth_II/BPL/LPL"/>
</dbReference>
<dbReference type="InterPro" id="IPR004525">
    <property type="entry name" value="EpmA"/>
</dbReference>
<dbReference type="NCBIfam" id="TIGR00462">
    <property type="entry name" value="genX"/>
    <property type="match status" value="1"/>
</dbReference>
<dbReference type="NCBIfam" id="NF006828">
    <property type="entry name" value="PRK09350.1"/>
    <property type="match status" value="1"/>
</dbReference>
<dbReference type="PANTHER" id="PTHR42918:SF6">
    <property type="entry name" value="ELONGATION FACTOR P--(R)-BETA-LYSINE LIGASE"/>
    <property type="match status" value="1"/>
</dbReference>
<dbReference type="PANTHER" id="PTHR42918">
    <property type="entry name" value="LYSYL-TRNA SYNTHETASE"/>
    <property type="match status" value="1"/>
</dbReference>
<dbReference type="Pfam" id="PF00152">
    <property type="entry name" value="tRNA-synt_2"/>
    <property type="match status" value="1"/>
</dbReference>
<dbReference type="SUPFAM" id="SSF55681">
    <property type="entry name" value="Class II aaRS and biotin synthetases"/>
    <property type="match status" value="1"/>
</dbReference>
<dbReference type="PROSITE" id="PS50862">
    <property type="entry name" value="AA_TRNA_LIGASE_II"/>
    <property type="match status" value="1"/>
</dbReference>
<keyword id="KW-0067">ATP-binding</keyword>
<keyword id="KW-0436">Ligase</keyword>
<keyword id="KW-0547">Nucleotide-binding</keyword>
<keyword id="KW-1185">Reference proteome</keyword>
<sequence>MNKLISWKPRASIHNLFIRAKIINNIRIFFINRGLLEVETPVMSHTTVPDIYLFPFQTNLYFLEKVPEKGVPMYLITSPEYHMKRLLAAGSGPIFQICHSFRNQEYGNYHNPEFTLLEWYRPYYNMVDIMDEVNIFLQTIIHCDSAEMLSYQQVFRLHVGIDPLLAELDELNQVLVKFNLSSTISLYNDRDKLLDFLFLMLVRPHLGNNKPVFIYNFPASQSLLAELNSDDHRVAERFEVYFHGIELANGSRELTDADLQRERFMQENNKQVAMNRPPRLIDEQLLAALECGLPSCSGVALGIDRLLMLTLKAKHISEVMAFSVTDA</sequence>
<organism>
    <name type="scientific">Baumannia cicadellinicola subsp. Homalodisca coagulata</name>
    <dbReference type="NCBI Taxonomy" id="374463"/>
    <lineage>
        <taxon>Bacteria</taxon>
        <taxon>Pseudomonadati</taxon>
        <taxon>Pseudomonadota</taxon>
        <taxon>Gammaproteobacteria</taxon>
        <taxon>Candidatus Palibaumannia</taxon>
    </lineage>
</organism>
<evidence type="ECO:0000255" key="1">
    <source>
        <dbReference type="HAMAP-Rule" id="MF_00174"/>
    </source>
</evidence>
<gene>
    <name evidence="1" type="primary">epmA</name>
    <name type="synonym">yjeA</name>
    <name type="ordered locus">BCI_0588</name>
</gene>
<accession>Q1LSP8</accession>